<feature type="chain" id="PRO_0000397852" description="AP-1 complex subunit gamma-1">
    <location>
        <begin position="1"/>
        <end position="876"/>
    </location>
</feature>
<feature type="repeat" description="HEAT 1">
    <location>
        <begin position="97"/>
        <end position="135"/>
    </location>
</feature>
<feature type="repeat" description="HEAT 2">
    <location>
        <begin position="136"/>
        <end position="173"/>
    </location>
</feature>
<feature type="repeat" description="HEAT 3">
    <location>
        <begin position="248"/>
        <end position="284"/>
    </location>
</feature>
<feature type="repeat" description="HEAT 4">
    <location>
        <begin position="308"/>
        <end position="345"/>
    </location>
</feature>
<feature type="repeat" description="HEAT 5">
    <location>
        <begin position="346"/>
        <end position="382"/>
    </location>
</feature>
<feature type="repeat" description="HEAT 6">
    <location>
        <begin position="384"/>
        <end position="417"/>
    </location>
</feature>
<feature type="repeat" description="HEAT 7">
    <location>
        <begin position="418"/>
        <end position="454"/>
    </location>
</feature>
<feature type="repeat" description="HEAT 8">
    <location>
        <begin position="506"/>
        <end position="545"/>
    </location>
</feature>
<feature type="repeat" description="HEAT 9">
    <location>
        <begin position="560"/>
        <end position="599"/>
    </location>
</feature>
<feature type="domain" description="GAE" evidence="2">
    <location>
        <begin position="756"/>
        <end position="873"/>
    </location>
</feature>
<feature type="sequence conflict" description="In Ref. 1; AAC28338/AAD28247." evidence="5" ref="1">
    <original>S</original>
    <variation>A</variation>
    <location>
        <position position="466"/>
    </location>
</feature>
<feature type="sequence conflict" description="In Ref. 1; AAC28338/AAD28247." evidence="5" ref="1">
    <original>S</original>
    <variation>L</variation>
    <location>
        <position position="471"/>
    </location>
</feature>
<feature type="sequence conflict" description="In Ref. 1; AAC28338/AAD28247." evidence="5" ref="1">
    <original>ERIKD</original>
    <variation>VRIKG</variation>
    <location>
        <begin position="548"/>
        <end position="552"/>
    </location>
</feature>
<feature type="sequence conflict" description="In Ref. 1; CAB39730." evidence="5" ref="1">
    <original>A</original>
    <variation>V</variation>
    <location>
        <position position="645"/>
    </location>
</feature>
<feature type="sequence conflict" description="In Ref. 1; AAC28338/AAD28247/CAB39730." evidence="5" ref="1">
    <original>T</original>
    <variation>A</variation>
    <location>
        <position position="652"/>
    </location>
</feature>
<feature type="sequence conflict" description="In Ref. 1; CAB39730." evidence="5" ref="1">
    <original>G</original>
    <variation>R</variation>
    <location>
        <position position="703"/>
    </location>
</feature>
<feature type="sequence conflict" description="In Ref. 1; AAC28338/AAD28247." evidence="5" ref="1">
    <original>D</original>
    <variation>Y</variation>
    <location>
        <position position="719"/>
    </location>
</feature>
<feature type="sequence conflict" description="In Ref. 1; AAC28338/AAD28247." evidence="5" ref="1">
    <original>S</original>
    <variation>N</variation>
    <location>
        <position position="820"/>
    </location>
</feature>
<feature type="sequence conflict" description="In Ref. 1; AAC28338/AAD28247." evidence="5" ref="1">
    <original>L</original>
    <variation>P</variation>
    <location>
        <position position="825"/>
    </location>
</feature>
<dbReference type="EMBL" id="AF061286">
    <property type="protein sequence ID" value="AAC28338.1"/>
    <property type="molecule type" value="mRNA"/>
</dbReference>
<dbReference type="EMBL" id="AF124524">
    <property type="protein sequence ID" value="AAD28247.1"/>
    <property type="molecule type" value="Genomic_DNA"/>
</dbReference>
<dbReference type="EMBL" id="AJ133777">
    <property type="protein sequence ID" value="CAB39730.1"/>
    <property type="molecule type" value="mRNA"/>
</dbReference>
<dbReference type="EMBL" id="AC002423">
    <property type="protein sequence ID" value="AAF87139.1"/>
    <property type="status" value="ALT_SEQ"/>
    <property type="molecule type" value="Genomic_DNA"/>
</dbReference>
<dbReference type="EMBL" id="CP002684">
    <property type="protein sequence ID" value="AEE30448.1"/>
    <property type="molecule type" value="Genomic_DNA"/>
</dbReference>
<dbReference type="EMBL" id="CP002684">
    <property type="protein sequence ID" value="AEE30449.1"/>
    <property type="molecule type" value="Genomic_DNA"/>
</dbReference>
<dbReference type="EMBL" id="BT004307">
    <property type="protein sequence ID" value="AAO42305.1"/>
    <property type="molecule type" value="mRNA"/>
</dbReference>
<dbReference type="EMBL" id="BT005557">
    <property type="protein sequence ID" value="AAO63977.1"/>
    <property type="molecule type" value="mRNA"/>
</dbReference>
<dbReference type="PIR" id="T51951">
    <property type="entry name" value="T51951"/>
</dbReference>
<dbReference type="RefSeq" id="NP_173802.1">
    <property type="nucleotide sequence ID" value="NM_102238.2"/>
</dbReference>
<dbReference type="RefSeq" id="NP_849701.1">
    <property type="nucleotide sequence ID" value="NM_179370.4"/>
</dbReference>
<dbReference type="SMR" id="Q84K16"/>
<dbReference type="BioGRID" id="24239">
    <property type="interactions" value="14"/>
</dbReference>
<dbReference type="FunCoup" id="Q84K16">
    <property type="interactions" value="4197"/>
</dbReference>
<dbReference type="IntAct" id="Q84K16">
    <property type="interactions" value="4"/>
</dbReference>
<dbReference type="STRING" id="3702.Q84K16"/>
<dbReference type="PaxDb" id="3702-AT1G23900.2"/>
<dbReference type="ProteomicsDB" id="240597"/>
<dbReference type="EnsemblPlants" id="AT1G23900.1">
    <property type="protein sequence ID" value="AT1G23900.1"/>
    <property type="gene ID" value="AT1G23900"/>
</dbReference>
<dbReference type="EnsemblPlants" id="AT1G23900.2">
    <property type="protein sequence ID" value="AT1G23900.2"/>
    <property type="gene ID" value="AT1G23900"/>
</dbReference>
<dbReference type="GeneID" id="839001"/>
<dbReference type="Gramene" id="AT1G23900.1">
    <property type="protein sequence ID" value="AT1G23900.1"/>
    <property type="gene ID" value="AT1G23900"/>
</dbReference>
<dbReference type="Gramene" id="AT1G23900.2">
    <property type="protein sequence ID" value="AT1G23900.2"/>
    <property type="gene ID" value="AT1G23900"/>
</dbReference>
<dbReference type="KEGG" id="ath:AT1G23900"/>
<dbReference type="Araport" id="AT1G23900"/>
<dbReference type="TAIR" id="AT1G23900">
    <property type="gene designation" value="GAMMA-ADAPTIN 1"/>
</dbReference>
<dbReference type="eggNOG" id="KOG1062">
    <property type="taxonomic scope" value="Eukaryota"/>
</dbReference>
<dbReference type="HOGENOM" id="CLU_003824_0_0_1"/>
<dbReference type="InParanoid" id="Q84K16"/>
<dbReference type="OMA" id="XYAPSKR"/>
<dbReference type="PhylomeDB" id="Q84K16"/>
<dbReference type="PRO" id="PR:Q84K16"/>
<dbReference type="Proteomes" id="UP000006548">
    <property type="component" value="Chromosome 1"/>
</dbReference>
<dbReference type="ExpressionAtlas" id="Q84K16">
    <property type="expression patterns" value="baseline and differential"/>
</dbReference>
<dbReference type="GO" id="GO:0030121">
    <property type="term" value="C:AP-1 adaptor complex"/>
    <property type="evidence" value="ECO:0000250"/>
    <property type="project" value="TAIR"/>
</dbReference>
<dbReference type="GO" id="GO:0005634">
    <property type="term" value="C:nucleus"/>
    <property type="evidence" value="ECO:0007005"/>
    <property type="project" value="TAIR"/>
</dbReference>
<dbReference type="GO" id="GO:0006886">
    <property type="term" value="P:intracellular protein transport"/>
    <property type="evidence" value="ECO:0007669"/>
    <property type="project" value="InterPro"/>
</dbReference>
<dbReference type="GO" id="GO:0016192">
    <property type="term" value="P:vesicle-mediated transport"/>
    <property type="evidence" value="ECO:0000250"/>
    <property type="project" value="TAIR"/>
</dbReference>
<dbReference type="FunFam" id="1.25.10.10:FF:000030">
    <property type="entry name" value="AP-1 complex subunit gamma"/>
    <property type="match status" value="1"/>
</dbReference>
<dbReference type="FunFam" id="2.60.40.1230:FF:000008">
    <property type="entry name" value="AP-1 complex subunit gamma"/>
    <property type="match status" value="1"/>
</dbReference>
<dbReference type="Gene3D" id="2.60.40.1230">
    <property type="match status" value="1"/>
</dbReference>
<dbReference type="Gene3D" id="1.25.10.10">
    <property type="entry name" value="Leucine-rich Repeat Variant"/>
    <property type="match status" value="1"/>
</dbReference>
<dbReference type="InterPro" id="IPR050840">
    <property type="entry name" value="Adaptor_Complx_Large_Subunit"/>
</dbReference>
<dbReference type="InterPro" id="IPR017107">
    <property type="entry name" value="AP1_complex_gsu"/>
</dbReference>
<dbReference type="InterPro" id="IPR011989">
    <property type="entry name" value="ARM-like"/>
</dbReference>
<dbReference type="InterPro" id="IPR016024">
    <property type="entry name" value="ARM-type_fold"/>
</dbReference>
<dbReference type="InterPro" id="IPR002553">
    <property type="entry name" value="Clathrin/coatomer_adapt-like_N"/>
</dbReference>
<dbReference type="InterPro" id="IPR008152">
    <property type="entry name" value="Clathrin_a/b/g-adaptin_app_Ig"/>
</dbReference>
<dbReference type="InterPro" id="IPR013041">
    <property type="entry name" value="Clathrin_app_Ig-like_sf"/>
</dbReference>
<dbReference type="InterPro" id="IPR008153">
    <property type="entry name" value="GAE_dom"/>
</dbReference>
<dbReference type="PANTHER" id="PTHR22780">
    <property type="entry name" value="ADAPTIN, ALPHA/GAMMA/EPSILON"/>
    <property type="match status" value="1"/>
</dbReference>
<dbReference type="Pfam" id="PF01602">
    <property type="entry name" value="Adaptin_N"/>
    <property type="match status" value="1"/>
</dbReference>
<dbReference type="Pfam" id="PF02883">
    <property type="entry name" value="Alpha_adaptinC2"/>
    <property type="match status" value="1"/>
</dbReference>
<dbReference type="PIRSF" id="PIRSF037094">
    <property type="entry name" value="AP1_complex_gamma"/>
    <property type="match status" value="1"/>
</dbReference>
<dbReference type="SMART" id="SM00809">
    <property type="entry name" value="Alpha_adaptinC2"/>
    <property type="match status" value="1"/>
</dbReference>
<dbReference type="SUPFAM" id="SSF48371">
    <property type="entry name" value="ARM repeat"/>
    <property type="match status" value="1"/>
</dbReference>
<dbReference type="SUPFAM" id="SSF49348">
    <property type="entry name" value="Clathrin adaptor appendage domain"/>
    <property type="match status" value="1"/>
</dbReference>
<dbReference type="PROSITE" id="PS50180">
    <property type="entry name" value="GAE"/>
    <property type="match status" value="1"/>
</dbReference>
<evidence type="ECO:0000250" key="1"/>
<evidence type="ECO:0000255" key="2">
    <source>
        <dbReference type="PROSITE-ProRule" id="PRU00093"/>
    </source>
</evidence>
<evidence type="ECO:0000269" key="3">
    <source>
    </source>
</evidence>
<evidence type="ECO:0000269" key="4">
    <source>
    </source>
</evidence>
<evidence type="ECO:0000305" key="5"/>
<accession>Q84K16</accession>
<accession>O81227</accession>
<accession>Q9LRA3</accession>
<accession>Q9XFS0</accession>
<keyword id="KW-0968">Cytoplasmic vesicle</keyword>
<keyword id="KW-0333">Golgi apparatus</keyword>
<keyword id="KW-0472">Membrane</keyword>
<keyword id="KW-0653">Protein transport</keyword>
<keyword id="KW-1185">Reference proteome</keyword>
<keyword id="KW-0677">Repeat</keyword>
<keyword id="KW-0813">Transport</keyword>
<protein>
    <recommendedName>
        <fullName>AP-1 complex subunit gamma-1</fullName>
    </recommendedName>
    <alternativeName>
        <fullName>Adaptor protein complex AP-1 large subunit gamma-1</fullName>
    </alternativeName>
    <alternativeName>
        <fullName>Adaptor-related protein complex 1 subunit gamma-1</fullName>
    </alternativeName>
    <alternativeName>
        <fullName>Clathrin assembly protein complex 1 gamma-1 large chain</fullName>
        <shortName>At-g-Ad</shortName>
        <shortName>At-gamma-Ad</shortName>
    </alternativeName>
    <alternativeName>
        <fullName>Gamma-adaptin 1</fullName>
    </alternativeName>
</protein>
<organism>
    <name type="scientific">Arabidopsis thaliana</name>
    <name type="common">Mouse-ear cress</name>
    <dbReference type="NCBI Taxonomy" id="3702"/>
    <lineage>
        <taxon>Eukaryota</taxon>
        <taxon>Viridiplantae</taxon>
        <taxon>Streptophyta</taxon>
        <taxon>Embryophyta</taxon>
        <taxon>Tracheophyta</taxon>
        <taxon>Spermatophyta</taxon>
        <taxon>Magnoliopsida</taxon>
        <taxon>eudicotyledons</taxon>
        <taxon>Gunneridae</taxon>
        <taxon>Pentapetalae</taxon>
        <taxon>rosids</taxon>
        <taxon>malvids</taxon>
        <taxon>Brassicales</taxon>
        <taxon>Brassicaceae</taxon>
        <taxon>Camelineae</taxon>
        <taxon>Arabidopsis</taxon>
    </lineage>
</organism>
<comment type="function">
    <text evidence="1">Subunit of clathrin-associated adaptor protein complex 1 that plays a role in protein sorting at the trans-Golgi network and early endosomes (TGN/EE). The AP complexes mediate both the recruitment of clathrin to membranes and the recognition of sorting signals within the cytosolic tails of transmembrane cargo molecules (By similarity).</text>
</comment>
<comment type="subunit">
    <text evidence="3 4 5">Adaptor protein complex 1 (AP-1) is a heterotetramer composed of two large adaptins (gamma-type subunit and beta-type subunit), a medium adaptin (mu-type subunit) and a small adaptin (sigma-type subunit) (Probable). Binds to EPSIN1 (PubMed:16905657). Interacts with DRP2A/ADL6 (via C-terminus) (PubMed:12207647).</text>
</comment>
<comment type="interaction">
    <interactant intactId="EBI-1163115">
        <id>Q84K16</id>
    </interactant>
    <interactant intactId="EBI-1162785">
        <id>Q8VY07</id>
        <label>EPSIN1</label>
    </interactant>
    <organismsDiffer>false</organismsDiffer>
    <experiments>2</experiments>
</comment>
<comment type="subcellular location">
    <subcellularLocation>
        <location evidence="1">Golgi apparatus</location>
    </subcellularLocation>
    <subcellularLocation>
        <location evidence="1">Cytoplasmic vesicle</location>
        <location evidence="1">Clathrin-coated vesicle membrane</location>
        <topology evidence="1">Peripheral membrane protein</topology>
        <orientation evidence="1">Cytoplasmic side</orientation>
    </subcellularLocation>
</comment>
<comment type="similarity">
    <text evidence="5">Belongs to the adaptor complexes large subunit family.</text>
</comment>
<comment type="sequence caution" evidence="5">
    <conflict type="erroneous gene model prediction">
        <sequence resource="EMBL-CDS" id="AAF87139"/>
    </conflict>
</comment>
<sequence>MNPFSSGTRLRDMIRAIRACKTAAEERAVVRKECADIRALINEDDPHDRHRNLAKLMFIHMLGYPTHFGQMECLKLIASPGFPEKRIGYLGLMLLLDERQEVLMLVTNSLKQDLNHSNQYVVGLALCALGNICSAEMARDLAPEVERLIQFRDPNIRKKAALCSTRIIRKVPDLAENFVNAAASLLKEKHHGVLITGVQLCYELCTINDEALEYFRTKCTEGLIKTLRDITNSAYQPEYDVAGITDPFLHIRLLRLLRVLGQGDADASDLMTDILAQVATKTESNKNAGNAVLYECVETIMAIEDTNSLRVLAINILGRFLSNRDNNIRYVALNMLMKAITFDDQAVQRHRVTILECVKDPDASIRKRALELVTLLVNENNVTQLTKELIDYLEISDEDFKEDLSAKICFIVEKFSPEKLWYIDQMLKVLCEAGKFVKDDVWHALIVVISNASELHGYTVRALYKSVLTYSEQETLVRVAVWCIGEYGDLLVNNVGMLGIEDPITVTESDAVDVIEDAITRHNSDSTTKAMALVALLKLSSRFPSISERIKDIIVKQKGSLLLEMQQRAIEYNSIVDRHKNIRSSLVDRMPVLDEATFNVRRAGSFPASVSTMAKPSVSLQNGVEKLPVAPLVDLLDLDSDDIMAAPSPSGTDFLQDLLGVDLGSSSAQYGATQAPKAGTDLLLDILSIGTPSPAQNSTSSIGLLSIADVNNNPSIALDTLSSPAPPHVATTSSTGMFDLLDGLSPSPSKEATNGPAYAPIVAYESSSLKIEFTFSKTPGNLQTTNVQATFTNLSPNTFTDFIFQAAVPKFLQLHLDPASSNTLLASGSGAITQNLRVTNSQQGKKSLVMRMRIGYKLNGKDVLEEGQVSNFPRGL</sequence>
<gene>
    <name type="primary">GAMMA-ADR</name>
    <name type="ordered locus">At1g23900</name>
    <name type="ORF">T23E23.7</name>
</gene>
<proteinExistence type="evidence at protein level"/>
<name>AP1G1_ARATH</name>
<reference key="1">
    <citation type="submission" date="1999-01" db="EMBL/GenBank/DDBJ databases">
        <title>Molecular cloning and sequencing of the gamma-adaptin 1 gene of Arabidopsis thaliana.</title>
        <authorList>
            <person name="Schledzewski K."/>
            <person name="LaBrie S.T."/>
            <person name="Crawford N.M."/>
            <person name="Brinkmann H."/>
            <person name="Mendel R.R."/>
        </authorList>
    </citation>
    <scope>NUCLEOTIDE SEQUENCE [GENOMIC DNA / MRNA]</scope>
    <source>
        <strain>cv. Columbia</strain>
        <strain>cv. Wassilewskija</strain>
    </source>
</reference>
<reference key="2">
    <citation type="journal article" date="2000" name="Nature">
        <title>Sequence and analysis of chromosome 1 of the plant Arabidopsis thaliana.</title>
        <authorList>
            <person name="Theologis A."/>
            <person name="Ecker J.R."/>
            <person name="Palm C.J."/>
            <person name="Federspiel N.A."/>
            <person name="Kaul S."/>
            <person name="White O."/>
            <person name="Alonso J."/>
            <person name="Altafi H."/>
            <person name="Araujo R."/>
            <person name="Bowman C.L."/>
            <person name="Brooks S.Y."/>
            <person name="Buehler E."/>
            <person name="Chan A."/>
            <person name="Chao Q."/>
            <person name="Chen H."/>
            <person name="Cheuk R.F."/>
            <person name="Chin C.W."/>
            <person name="Chung M.K."/>
            <person name="Conn L."/>
            <person name="Conway A.B."/>
            <person name="Conway A.R."/>
            <person name="Creasy T.H."/>
            <person name="Dewar K."/>
            <person name="Dunn P."/>
            <person name="Etgu P."/>
            <person name="Feldblyum T.V."/>
            <person name="Feng J.-D."/>
            <person name="Fong B."/>
            <person name="Fujii C.Y."/>
            <person name="Gill J.E."/>
            <person name="Goldsmith A.D."/>
            <person name="Haas B."/>
            <person name="Hansen N.F."/>
            <person name="Hughes B."/>
            <person name="Huizar L."/>
            <person name="Hunter J.L."/>
            <person name="Jenkins J."/>
            <person name="Johnson-Hopson C."/>
            <person name="Khan S."/>
            <person name="Khaykin E."/>
            <person name="Kim C.J."/>
            <person name="Koo H.L."/>
            <person name="Kremenetskaia I."/>
            <person name="Kurtz D.B."/>
            <person name="Kwan A."/>
            <person name="Lam B."/>
            <person name="Langin-Hooper S."/>
            <person name="Lee A."/>
            <person name="Lee J.M."/>
            <person name="Lenz C.A."/>
            <person name="Li J.H."/>
            <person name="Li Y.-P."/>
            <person name="Lin X."/>
            <person name="Liu S.X."/>
            <person name="Liu Z.A."/>
            <person name="Luros J.S."/>
            <person name="Maiti R."/>
            <person name="Marziali A."/>
            <person name="Militscher J."/>
            <person name="Miranda M."/>
            <person name="Nguyen M."/>
            <person name="Nierman W.C."/>
            <person name="Osborne B.I."/>
            <person name="Pai G."/>
            <person name="Peterson J."/>
            <person name="Pham P.K."/>
            <person name="Rizzo M."/>
            <person name="Rooney T."/>
            <person name="Rowley D."/>
            <person name="Sakano H."/>
            <person name="Salzberg S.L."/>
            <person name="Schwartz J.R."/>
            <person name="Shinn P."/>
            <person name="Southwick A.M."/>
            <person name="Sun H."/>
            <person name="Tallon L.J."/>
            <person name="Tambunga G."/>
            <person name="Toriumi M.J."/>
            <person name="Town C.D."/>
            <person name="Utterback T."/>
            <person name="Van Aken S."/>
            <person name="Vaysberg M."/>
            <person name="Vysotskaia V.S."/>
            <person name="Walker M."/>
            <person name="Wu D."/>
            <person name="Yu G."/>
            <person name="Fraser C.M."/>
            <person name="Venter J.C."/>
            <person name="Davis R.W."/>
        </authorList>
    </citation>
    <scope>NUCLEOTIDE SEQUENCE [LARGE SCALE GENOMIC DNA]</scope>
    <source>
        <strain>cv. Columbia</strain>
    </source>
</reference>
<reference key="3">
    <citation type="journal article" date="2017" name="Plant J.">
        <title>Araport11: a complete reannotation of the Arabidopsis thaliana reference genome.</title>
        <authorList>
            <person name="Cheng C.Y."/>
            <person name="Krishnakumar V."/>
            <person name="Chan A.P."/>
            <person name="Thibaud-Nissen F."/>
            <person name="Schobel S."/>
            <person name="Town C.D."/>
        </authorList>
    </citation>
    <scope>GENOME REANNOTATION</scope>
    <source>
        <strain>cv. Columbia</strain>
    </source>
</reference>
<reference key="4">
    <citation type="journal article" date="2003" name="Science">
        <title>Empirical analysis of transcriptional activity in the Arabidopsis genome.</title>
        <authorList>
            <person name="Yamada K."/>
            <person name="Lim J."/>
            <person name="Dale J.M."/>
            <person name="Chen H."/>
            <person name="Shinn P."/>
            <person name="Palm C.J."/>
            <person name="Southwick A.M."/>
            <person name="Wu H.C."/>
            <person name="Kim C.J."/>
            <person name="Nguyen M."/>
            <person name="Pham P.K."/>
            <person name="Cheuk R.F."/>
            <person name="Karlin-Newmann G."/>
            <person name="Liu S.X."/>
            <person name="Lam B."/>
            <person name="Sakano H."/>
            <person name="Wu T."/>
            <person name="Yu G."/>
            <person name="Miranda M."/>
            <person name="Quach H.L."/>
            <person name="Tripp M."/>
            <person name="Chang C.H."/>
            <person name="Lee J.M."/>
            <person name="Toriumi M.J."/>
            <person name="Chan M.M."/>
            <person name="Tang C.C."/>
            <person name="Onodera C.S."/>
            <person name="Deng J.M."/>
            <person name="Akiyama K."/>
            <person name="Ansari Y."/>
            <person name="Arakawa T."/>
            <person name="Banh J."/>
            <person name="Banno F."/>
            <person name="Bowser L."/>
            <person name="Brooks S.Y."/>
            <person name="Carninci P."/>
            <person name="Chao Q."/>
            <person name="Choy N."/>
            <person name="Enju A."/>
            <person name="Goldsmith A.D."/>
            <person name="Gurjal M."/>
            <person name="Hansen N.F."/>
            <person name="Hayashizaki Y."/>
            <person name="Johnson-Hopson C."/>
            <person name="Hsuan V.W."/>
            <person name="Iida K."/>
            <person name="Karnes M."/>
            <person name="Khan S."/>
            <person name="Koesema E."/>
            <person name="Ishida J."/>
            <person name="Jiang P.X."/>
            <person name="Jones T."/>
            <person name="Kawai J."/>
            <person name="Kamiya A."/>
            <person name="Meyers C."/>
            <person name="Nakajima M."/>
            <person name="Narusaka M."/>
            <person name="Seki M."/>
            <person name="Sakurai T."/>
            <person name="Satou M."/>
            <person name="Tamse R."/>
            <person name="Vaysberg M."/>
            <person name="Wallender E.K."/>
            <person name="Wong C."/>
            <person name="Yamamura Y."/>
            <person name="Yuan S."/>
            <person name="Shinozaki K."/>
            <person name="Davis R.W."/>
            <person name="Theologis A."/>
            <person name="Ecker J.R."/>
        </authorList>
    </citation>
    <scope>NUCLEOTIDE SEQUENCE [LARGE SCALE MRNA]</scope>
    <source>
        <strain>cv. Columbia</strain>
    </source>
</reference>
<reference key="5">
    <citation type="journal article" date="2001" name="Mol. Biol. Cell">
        <title>Adaptins: the final recount.</title>
        <authorList>
            <person name="Boehm M."/>
            <person name="Bonifacino J.S."/>
        </authorList>
    </citation>
    <scope>GENE FAMILY</scope>
    <scope>REVIEW</scope>
</reference>
<reference key="6">
    <citation type="journal article" date="2002" name="Plant J.">
        <title>Regulation of ADL6 activity by its associated molecular network.</title>
        <authorList>
            <person name="Lam B.C.-H."/>
            <person name="Sage T.L."/>
            <person name="Bianchi F."/>
            <person name="Blumwald E."/>
        </authorList>
    </citation>
    <scope>INTERACTION WITH DRP2A</scope>
</reference>
<reference key="7">
    <citation type="journal article" date="2006" name="Plant Cell">
        <title>Arabidopsis EPSIN1 plays an important role in vacuolar trafficking of soluble cargo proteins in plant cells via interactions with clathrin, AP-1, VTI11, and VSR1.</title>
        <authorList>
            <person name="Song J."/>
            <person name="Lee M.H."/>
            <person name="Lee G.-J."/>
            <person name="Yoo C.M."/>
            <person name="Hwang I."/>
        </authorList>
    </citation>
    <scope>INTERACTION WITH EPSIN1</scope>
</reference>
<reference key="8">
    <citation type="journal article" date="2013" name="Plant Cell Physiol.">
        <title>The AP-1 mu adaptin is required for KNOLLE localization at the cell plate to mediate cytokinesis in Arabidopsis.</title>
        <authorList>
            <person name="Teh O.K."/>
            <person name="Shimono Y."/>
            <person name="Shirakawa M."/>
            <person name="Fukao Y."/>
            <person name="Tamura K."/>
            <person name="Shimada T."/>
            <person name="Hara-Nishimura I."/>
        </authorList>
    </citation>
    <scope>IDENTIFICATION BY MASS SPECTROMETRY</scope>
    <scope>COMPONENT OF THE AP-1 COMPLEX</scope>
</reference>